<proteinExistence type="inferred from homology"/>
<dbReference type="EMBL" id="AL591973">
    <property type="protein sequence ID" value="CAC98220.1"/>
    <property type="molecule type" value="Genomic_DNA"/>
</dbReference>
<dbReference type="PIR" id="AF1432">
    <property type="entry name" value="AF1432"/>
</dbReference>
<dbReference type="RefSeq" id="NP_463538.1">
    <property type="nucleotide sequence ID" value="NC_003210.1"/>
</dbReference>
<dbReference type="RefSeq" id="WP_003723768.1">
    <property type="nucleotide sequence ID" value="NZ_CP149495.1"/>
</dbReference>
<dbReference type="SMR" id="Q8YAV8"/>
<dbReference type="STRING" id="169963.gene:17592640"/>
<dbReference type="PaxDb" id="169963-lmo0005"/>
<dbReference type="EnsemblBacteria" id="CAC98220">
    <property type="protein sequence ID" value="CAC98220"/>
    <property type="gene ID" value="CAC98220"/>
</dbReference>
<dbReference type="GeneID" id="984623"/>
<dbReference type="KEGG" id="lmo:lmo0005"/>
<dbReference type="PATRIC" id="fig|169963.11.peg.5"/>
<dbReference type="eggNOG" id="COG1195">
    <property type="taxonomic scope" value="Bacteria"/>
</dbReference>
<dbReference type="HOGENOM" id="CLU_040267_0_1_9"/>
<dbReference type="OrthoDB" id="9803889at2"/>
<dbReference type="PhylomeDB" id="Q8YAV8"/>
<dbReference type="BioCyc" id="LMON169963:LMO0005-MONOMER"/>
<dbReference type="Proteomes" id="UP000000817">
    <property type="component" value="Chromosome"/>
</dbReference>
<dbReference type="GO" id="GO:0005737">
    <property type="term" value="C:cytoplasm"/>
    <property type="evidence" value="ECO:0007669"/>
    <property type="project" value="UniProtKB-SubCell"/>
</dbReference>
<dbReference type="GO" id="GO:0005524">
    <property type="term" value="F:ATP binding"/>
    <property type="evidence" value="ECO:0007669"/>
    <property type="project" value="UniProtKB-UniRule"/>
</dbReference>
<dbReference type="GO" id="GO:0003697">
    <property type="term" value="F:single-stranded DNA binding"/>
    <property type="evidence" value="ECO:0007669"/>
    <property type="project" value="UniProtKB-UniRule"/>
</dbReference>
<dbReference type="GO" id="GO:0006260">
    <property type="term" value="P:DNA replication"/>
    <property type="evidence" value="ECO:0007669"/>
    <property type="project" value="UniProtKB-UniRule"/>
</dbReference>
<dbReference type="GO" id="GO:0000731">
    <property type="term" value="P:DNA synthesis involved in DNA repair"/>
    <property type="evidence" value="ECO:0000318"/>
    <property type="project" value="GO_Central"/>
</dbReference>
<dbReference type="GO" id="GO:0006302">
    <property type="term" value="P:double-strand break repair"/>
    <property type="evidence" value="ECO:0000318"/>
    <property type="project" value="GO_Central"/>
</dbReference>
<dbReference type="GO" id="GO:0009432">
    <property type="term" value="P:SOS response"/>
    <property type="evidence" value="ECO:0007669"/>
    <property type="project" value="UniProtKB-UniRule"/>
</dbReference>
<dbReference type="CDD" id="cd03242">
    <property type="entry name" value="ABC_RecF"/>
    <property type="match status" value="1"/>
</dbReference>
<dbReference type="FunFam" id="1.20.1050.90:FF:000002">
    <property type="entry name" value="DNA replication and repair protein RecF"/>
    <property type="match status" value="1"/>
</dbReference>
<dbReference type="Gene3D" id="3.40.50.300">
    <property type="entry name" value="P-loop containing nucleotide triphosphate hydrolases"/>
    <property type="match status" value="1"/>
</dbReference>
<dbReference type="Gene3D" id="1.20.1050.90">
    <property type="entry name" value="RecF/RecN/SMC, N-terminal domain"/>
    <property type="match status" value="1"/>
</dbReference>
<dbReference type="HAMAP" id="MF_00365">
    <property type="entry name" value="RecF"/>
    <property type="match status" value="1"/>
</dbReference>
<dbReference type="InterPro" id="IPR001238">
    <property type="entry name" value="DNA-binding_RecF"/>
</dbReference>
<dbReference type="InterPro" id="IPR018078">
    <property type="entry name" value="DNA-binding_RecF_CS"/>
</dbReference>
<dbReference type="InterPro" id="IPR027417">
    <property type="entry name" value="P-loop_NTPase"/>
</dbReference>
<dbReference type="InterPro" id="IPR003395">
    <property type="entry name" value="RecF/RecN/SMC_N"/>
</dbReference>
<dbReference type="InterPro" id="IPR042174">
    <property type="entry name" value="RecF_2"/>
</dbReference>
<dbReference type="NCBIfam" id="TIGR00611">
    <property type="entry name" value="recf"/>
    <property type="match status" value="1"/>
</dbReference>
<dbReference type="PANTHER" id="PTHR32182">
    <property type="entry name" value="DNA REPLICATION AND REPAIR PROTEIN RECF"/>
    <property type="match status" value="1"/>
</dbReference>
<dbReference type="PANTHER" id="PTHR32182:SF0">
    <property type="entry name" value="DNA REPLICATION AND REPAIR PROTEIN RECF"/>
    <property type="match status" value="1"/>
</dbReference>
<dbReference type="Pfam" id="PF02463">
    <property type="entry name" value="SMC_N"/>
    <property type="match status" value="1"/>
</dbReference>
<dbReference type="SUPFAM" id="SSF52540">
    <property type="entry name" value="P-loop containing nucleoside triphosphate hydrolases"/>
    <property type="match status" value="1"/>
</dbReference>
<dbReference type="PROSITE" id="PS00617">
    <property type="entry name" value="RECF_1"/>
    <property type="match status" value="1"/>
</dbReference>
<dbReference type="PROSITE" id="PS00618">
    <property type="entry name" value="RECF_2"/>
    <property type="match status" value="1"/>
</dbReference>
<evidence type="ECO:0000255" key="1">
    <source>
        <dbReference type="HAMAP-Rule" id="MF_00365"/>
    </source>
</evidence>
<name>RECF_LISMO</name>
<sequence length="370" mass="42255">MHLESIVLRNFRNYENLELEFSPSVNVFLGENAQGKTNLLEAVLMLALAKSHRTTNDKDFIMWEKEEAKMEGRIAKHGQSVPLELAITQKGKRAKVNHLEQKKLSQYVGNLNVVIFAPEDLSLVKGAPGIRRRFLNMEIGQMQPIYLHNLSEYQRILQQRNQYLKMLQMKRKVDPILLDILTEQFADVAINLTKRRADFIQKLEAYAAPIHHQISRGLETLKIEYKASITLNGDDPEVWKADLLQKMESIKQREIDRGVTLIGPHRDDSLFYINGQNVQDFGSQGQQRTTALSIKLAEIDLIHEETGEYPVLLLDDVLSELDDYRQSHLLGAIEGKVQTFVTTTSTSGIDHETLKQATTFYVEKGTVKKS</sequence>
<comment type="function">
    <text evidence="1">The RecF protein is involved in DNA metabolism; it is required for DNA replication and normal SOS inducibility. RecF binds preferentially to single-stranded, linear DNA. It also seems to bind ATP.</text>
</comment>
<comment type="subcellular location">
    <subcellularLocation>
        <location evidence="1">Cytoplasm</location>
    </subcellularLocation>
</comment>
<comment type="similarity">
    <text evidence="1">Belongs to the RecF family.</text>
</comment>
<accession>Q8YAV8</accession>
<gene>
    <name evidence="1" type="primary">recF</name>
    <name type="ordered locus">lmo0005</name>
</gene>
<organism>
    <name type="scientific">Listeria monocytogenes serovar 1/2a (strain ATCC BAA-679 / EGD-e)</name>
    <dbReference type="NCBI Taxonomy" id="169963"/>
    <lineage>
        <taxon>Bacteria</taxon>
        <taxon>Bacillati</taxon>
        <taxon>Bacillota</taxon>
        <taxon>Bacilli</taxon>
        <taxon>Bacillales</taxon>
        <taxon>Listeriaceae</taxon>
        <taxon>Listeria</taxon>
    </lineage>
</organism>
<reference key="1">
    <citation type="journal article" date="2001" name="Science">
        <title>Comparative genomics of Listeria species.</title>
        <authorList>
            <person name="Glaser P."/>
            <person name="Frangeul L."/>
            <person name="Buchrieser C."/>
            <person name="Rusniok C."/>
            <person name="Amend A."/>
            <person name="Baquero F."/>
            <person name="Berche P."/>
            <person name="Bloecker H."/>
            <person name="Brandt P."/>
            <person name="Chakraborty T."/>
            <person name="Charbit A."/>
            <person name="Chetouani F."/>
            <person name="Couve E."/>
            <person name="de Daruvar A."/>
            <person name="Dehoux P."/>
            <person name="Domann E."/>
            <person name="Dominguez-Bernal G."/>
            <person name="Duchaud E."/>
            <person name="Durant L."/>
            <person name="Dussurget O."/>
            <person name="Entian K.-D."/>
            <person name="Fsihi H."/>
            <person name="Garcia-del Portillo F."/>
            <person name="Garrido P."/>
            <person name="Gautier L."/>
            <person name="Goebel W."/>
            <person name="Gomez-Lopez N."/>
            <person name="Hain T."/>
            <person name="Hauf J."/>
            <person name="Jackson D."/>
            <person name="Jones L.-M."/>
            <person name="Kaerst U."/>
            <person name="Kreft J."/>
            <person name="Kuhn M."/>
            <person name="Kunst F."/>
            <person name="Kurapkat G."/>
            <person name="Madueno E."/>
            <person name="Maitournam A."/>
            <person name="Mata Vicente J."/>
            <person name="Ng E."/>
            <person name="Nedjari H."/>
            <person name="Nordsiek G."/>
            <person name="Novella S."/>
            <person name="de Pablos B."/>
            <person name="Perez-Diaz J.-C."/>
            <person name="Purcell R."/>
            <person name="Remmel B."/>
            <person name="Rose M."/>
            <person name="Schlueter T."/>
            <person name="Simoes N."/>
            <person name="Tierrez A."/>
            <person name="Vazquez-Boland J.-A."/>
            <person name="Voss H."/>
            <person name="Wehland J."/>
            <person name="Cossart P."/>
        </authorList>
    </citation>
    <scope>NUCLEOTIDE SEQUENCE [LARGE SCALE GENOMIC DNA]</scope>
    <source>
        <strain>ATCC BAA-679 / EGD-e</strain>
    </source>
</reference>
<keyword id="KW-0067">ATP-binding</keyword>
<keyword id="KW-0963">Cytoplasm</keyword>
<keyword id="KW-0227">DNA damage</keyword>
<keyword id="KW-0234">DNA repair</keyword>
<keyword id="KW-0235">DNA replication</keyword>
<keyword id="KW-0238">DNA-binding</keyword>
<keyword id="KW-0547">Nucleotide-binding</keyword>
<keyword id="KW-1185">Reference proteome</keyword>
<keyword id="KW-0742">SOS response</keyword>
<feature type="chain" id="PRO_0000196430" description="DNA replication and repair protein RecF">
    <location>
        <begin position="1"/>
        <end position="370"/>
    </location>
</feature>
<feature type="binding site" evidence="1">
    <location>
        <begin position="30"/>
        <end position="37"/>
    </location>
    <ligand>
        <name>ATP</name>
        <dbReference type="ChEBI" id="CHEBI:30616"/>
    </ligand>
</feature>
<protein>
    <recommendedName>
        <fullName evidence="1">DNA replication and repair protein RecF</fullName>
    </recommendedName>
</protein>